<dbReference type="EC" id="2.8.2.-"/>
<dbReference type="EMBL" id="AL138649">
    <property type="protein sequence ID" value="CAB72145.1"/>
    <property type="molecule type" value="Genomic_DNA"/>
</dbReference>
<dbReference type="EMBL" id="CP002686">
    <property type="protein sequence ID" value="AEE77988.1"/>
    <property type="molecule type" value="Genomic_DNA"/>
</dbReference>
<dbReference type="EMBL" id="BT011733">
    <property type="protein sequence ID" value="AAS49096.1"/>
    <property type="molecule type" value="mRNA"/>
</dbReference>
<dbReference type="PIR" id="T47447">
    <property type="entry name" value="T47447"/>
</dbReference>
<dbReference type="RefSeq" id="NP_190093.1">
    <property type="nucleotide sequence ID" value="NM_114376.2"/>
</dbReference>
<dbReference type="SMR" id="Q9M1V2"/>
<dbReference type="FunCoup" id="Q9M1V2">
    <property type="interactions" value="39"/>
</dbReference>
<dbReference type="STRING" id="3702.Q9M1V2"/>
<dbReference type="PaxDb" id="3702-AT3G45070.1"/>
<dbReference type="ProteomicsDB" id="232516"/>
<dbReference type="EnsemblPlants" id="AT3G45070.1">
    <property type="protein sequence ID" value="AT3G45070.1"/>
    <property type="gene ID" value="AT3G45070"/>
</dbReference>
<dbReference type="GeneID" id="823642"/>
<dbReference type="Gramene" id="AT3G45070.1">
    <property type="protein sequence ID" value="AT3G45070.1"/>
    <property type="gene ID" value="AT3G45070"/>
</dbReference>
<dbReference type="KEGG" id="ath:AT3G45070"/>
<dbReference type="Araport" id="AT3G45070"/>
<dbReference type="TAIR" id="AT3G45070">
    <property type="gene designation" value="SULT202B1"/>
</dbReference>
<dbReference type="eggNOG" id="KOG1584">
    <property type="taxonomic scope" value="Eukaryota"/>
</dbReference>
<dbReference type="HOGENOM" id="CLU_027239_0_1_1"/>
<dbReference type="InParanoid" id="Q9M1V2"/>
<dbReference type="OMA" id="WIEVPAI"/>
<dbReference type="PhylomeDB" id="Q9M1V2"/>
<dbReference type="BioCyc" id="ARA:AT3G45070-MONOMER"/>
<dbReference type="PRO" id="PR:Q9M1V2"/>
<dbReference type="Proteomes" id="UP000006548">
    <property type="component" value="Chromosome 3"/>
</dbReference>
<dbReference type="ExpressionAtlas" id="Q9M1V2">
    <property type="expression patterns" value="baseline and differential"/>
</dbReference>
<dbReference type="GO" id="GO:0005737">
    <property type="term" value="C:cytoplasm"/>
    <property type="evidence" value="ECO:0007669"/>
    <property type="project" value="UniProtKB-SubCell"/>
</dbReference>
<dbReference type="GO" id="GO:1990135">
    <property type="term" value="F:flavonoid sulfotransferase activity"/>
    <property type="evidence" value="ECO:0000314"/>
    <property type="project" value="TAIR"/>
</dbReference>
<dbReference type="GO" id="GO:0008146">
    <property type="term" value="F:sulfotransferase activity"/>
    <property type="evidence" value="ECO:0000314"/>
    <property type="project" value="UniProtKB"/>
</dbReference>
<dbReference type="GO" id="GO:0009812">
    <property type="term" value="P:flavonoid metabolic process"/>
    <property type="evidence" value="ECO:0000314"/>
    <property type="project" value="UniProtKB"/>
</dbReference>
<dbReference type="FunFam" id="3.40.50.300:FF:001258">
    <property type="entry name" value="Sulfotransferase"/>
    <property type="match status" value="1"/>
</dbReference>
<dbReference type="Gene3D" id="3.40.50.300">
    <property type="entry name" value="P-loop containing nucleotide triphosphate hydrolases"/>
    <property type="match status" value="1"/>
</dbReference>
<dbReference type="InterPro" id="IPR027417">
    <property type="entry name" value="P-loop_NTPase"/>
</dbReference>
<dbReference type="InterPro" id="IPR000863">
    <property type="entry name" value="Sulfotransferase_dom"/>
</dbReference>
<dbReference type="PANTHER" id="PTHR11783">
    <property type="entry name" value="SULFOTRANSFERASE SULT"/>
    <property type="match status" value="1"/>
</dbReference>
<dbReference type="Pfam" id="PF00685">
    <property type="entry name" value="Sulfotransfer_1"/>
    <property type="match status" value="1"/>
</dbReference>
<dbReference type="SUPFAM" id="SSF52540">
    <property type="entry name" value="P-loop containing nucleoside triphosphate hydrolases"/>
    <property type="match status" value="1"/>
</dbReference>
<reference key="1">
    <citation type="journal article" date="2000" name="Nature">
        <title>Sequence and analysis of chromosome 3 of the plant Arabidopsis thaliana.</title>
        <authorList>
            <person name="Salanoubat M."/>
            <person name="Lemcke K."/>
            <person name="Rieger M."/>
            <person name="Ansorge W."/>
            <person name="Unseld M."/>
            <person name="Fartmann B."/>
            <person name="Valle G."/>
            <person name="Bloecker H."/>
            <person name="Perez-Alonso M."/>
            <person name="Obermaier B."/>
            <person name="Delseny M."/>
            <person name="Boutry M."/>
            <person name="Grivell L.A."/>
            <person name="Mache R."/>
            <person name="Puigdomenech P."/>
            <person name="De Simone V."/>
            <person name="Choisne N."/>
            <person name="Artiguenave F."/>
            <person name="Robert C."/>
            <person name="Brottier P."/>
            <person name="Wincker P."/>
            <person name="Cattolico L."/>
            <person name="Weissenbach J."/>
            <person name="Saurin W."/>
            <person name="Quetier F."/>
            <person name="Schaefer M."/>
            <person name="Mueller-Auer S."/>
            <person name="Gabel C."/>
            <person name="Fuchs M."/>
            <person name="Benes V."/>
            <person name="Wurmbach E."/>
            <person name="Drzonek H."/>
            <person name="Erfle H."/>
            <person name="Jordan N."/>
            <person name="Bangert S."/>
            <person name="Wiedelmann R."/>
            <person name="Kranz H."/>
            <person name="Voss H."/>
            <person name="Holland R."/>
            <person name="Brandt P."/>
            <person name="Nyakatura G."/>
            <person name="Vezzi A."/>
            <person name="D'Angelo M."/>
            <person name="Pallavicini A."/>
            <person name="Toppo S."/>
            <person name="Simionati B."/>
            <person name="Conrad A."/>
            <person name="Hornischer K."/>
            <person name="Kauer G."/>
            <person name="Loehnert T.-H."/>
            <person name="Nordsiek G."/>
            <person name="Reichelt J."/>
            <person name="Scharfe M."/>
            <person name="Schoen O."/>
            <person name="Bargues M."/>
            <person name="Terol J."/>
            <person name="Climent J."/>
            <person name="Navarro P."/>
            <person name="Collado C."/>
            <person name="Perez-Perez A."/>
            <person name="Ottenwaelder B."/>
            <person name="Duchemin D."/>
            <person name="Cooke R."/>
            <person name="Laudie M."/>
            <person name="Berger-Llauro C."/>
            <person name="Purnelle B."/>
            <person name="Masuy D."/>
            <person name="de Haan M."/>
            <person name="Maarse A.C."/>
            <person name="Alcaraz J.-P."/>
            <person name="Cottet A."/>
            <person name="Casacuberta E."/>
            <person name="Monfort A."/>
            <person name="Argiriou A."/>
            <person name="Flores M."/>
            <person name="Liguori R."/>
            <person name="Vitale D."/>
            <person name="Mannhaupt G."/>
            <person name="Haase D."/>
            <person name="Schoof H."/>
            <person name="Rudd S."/>
            <person name="Zaccaria P."/>
            <person name="Mewes H.-W."/>
            <person name="Mayer K.F.X."/>
            <person name="Kaul S."/>
            <person name="Town C.D."/>
            <person name="Koo H.L."/>
            <person name="Tallon L.J."/>
            <person name="Jenkins J."/>
            <person name="Rooney T."/>
            <person name="Rizzo M."/>
            <person name="Walts A."/>
            <person name="Utterback T."/>
            <person name="Fujii C.Y."/>
            <person name="Shea T.P."/>
            <person name="Creasy T.H."/>
            <person name="Haas B."/>
            <person name="Maiti R."/>
            <person name="Wu D."/>
            <person name="Peterson J."/>
            <person name="Van Aken S."/>
            <person name="Pai G."/>
            <person name="Militscher J."/>
            <person name="Sellers P."/>
            <person name="Gill J.E."/>
            <person name="Feldblyum T.V."/>
            <person name="Preuss D."/>
            <person name="Lin X."/>
            <person name="Nierman W.C."/>
            <person name="Salzberg S.L."/>
            <person name="White O."/>
            <person name="Venter J.C."/>
            <person name="Fraser C.M."/>
            <person name="Kaneko T."/>
            <person name="Nakamura Y."/>
            <person name="Sato S."/>
            <person name="Kato T."/>
            <person name="Asamizu E."/>
            <person name="Sasamoto S."/>
            <person name="Kimura T."/>
            <person name="Idesawa K."/>
            <person name="Kawashima K."/>
            <person name="Kishida Y."/>
            <person name="Kiyokawa C."/>
            <person name="Kohara M."/>
            <person name="Matsumoto M."/>
            <person name="Matsuno A."/>
            <person name="Muraki A."/>
            <person name="Nakayama S."/>
            <person name="Nakazaki N."/>
            <person name="Shinpo S."/>
            <person name="Takeuchi C."/>
            <person name="Wada T."/>
            <person name="Watanabe A."/>
            <person name="Yamada M."/>
            <person name="Yasuda M."/>
            <person name="Tabata S."/>
        </authorList>
    </citation>
    <scope>NUCLEOTIDE SEQUENCE [LARGE SCALE GENOMIC DNA]</scope>
    <source>
        <strain>cv. Columbia</strain>
    </source>
</reference>
<reference key="2">
    <citation type="journal article" date="2017" name="Plant J.">
        <title>Araport11: a complete reannotation of the Arabidopsis thaliana reference genome.</title>
        <authorList>
            <person name="Cheng C.Y."/>
            <person name="Krishnakumar V."/>
            <person name="Chan A.P."/>
            <person name="Thibaud-Nissen F."/>
            <person name="Schobel S."/>
            <person name="Town C.D."/>
        </authorList>
    </citation>
    <scope>GENOME REANNOTATION</scope>
    <source>
        <strain>cv. Columbia</strain>
    </source>
</reference>
<reference key="3">
    <citation type="submission" date="2004-03" db="EMBL/GenBank/DDBJ databases">
        <title>Arabidopsis ORF clones.</title>
        <authorList>
            <person name="Cheuk R."/>
            <person name="Chen H."/>
            <person name="Kim C.J."/>
            <person name="Shinn P."/>
            <person name="Carninci P."/>
            <person name="Hayashizaki Y."/>
            <person name="Ishida J."/>
            <person name="Kamiya A."/>
            <person name="Kawai J."/>
            <person name="Narusaka M."/>
            <person name="Sakurai T."/>
            <person name="Satou M."/>
            <person name="Seki M."/>
            <person name="Shinozaki K."/>
            <person name="Ecker J.R."/>
        </authorList>
    </citation>
    <scope>NUCLEOTIDE SEQUENCE [LARGE SCALE MRNA]</scope>
</reference>
<reference key="4">
    <citation type="journal article" date="2004" name="J. Exp. Bot.">
        <title>The multi-protein family of Arabidopsis sulphotransferases and their relatives in other plant species.</title>
        <authorList>
            <person name="Klein M."/>
            <person name="Papenbrock J."/>
        </authorList>
    </citation>
    <scope>GENE FAMILY</scope>
    <scope>NOMENCLATURE</scope>
</reference>
<reference key="5">
    <citation type="journal article" date="2006" name="Plant Physiol. Biochem.">
        <title>Biochemical and molecular characterization of flavonoid 7-sulfotransferase from Arabidopsis thaliana.</title>
        <authorList>
            <person name="Gidda S.K."/>
            <person name="Varin L."/>
        </authorList>
    </citation>
    <scope>FUNCTION</scope>
    <scope>CATALYTIC ACTIVITY</scope>
    <scope>BIOPHYSICOCHEMICAL PROPERTIES</scope>
    <scope>DEVELOPMENTAL STAGE</scope>
    <scope>TISSUE SPECIFICITY</scope>
    <scope>INDUCTION</scope>
    <source>
        <strain>cv. Columbia</strain>
    </source>
</reference>
<gene>
    <name type="primary">SOT5</name>
    <name type="synonym">ST3A</name>
    <name type="ordered locus">At3g45070</name>
    <name type="ORF">T14D3.10</name>
</gene>
<evidence type="ECO:0000250" key="1"/>
<evidence type="ECO:0000269" key="2">
    <source>
    </source>
</evidence>
<evidence type="ECO:0000305" key="3"/>
<organism>
    <name type="scientific">Arabidopsis thaliana</name>
    <name type="common">Mouse-ear cress</name>
    <dbReference type="NCBI Taxonomy" id="3702"/>
    <lineage>
        <taxon>Eukaryota</taxon>
        <taxon>Viridiplantae</taxon>
        <taxon>Streptophyta</taxon>
        <taxon>Embryophyta</taxon>
        <taxon>Tracheophyta</taxon>
        <taxon>Spermatophyta</taxon>
        <taxon>Magnoliopsida</taxon>
        <taxon>eudicotyledons</taxon>
        <taxon>Gunneridae</taxon>
        <taxon>Pentapetalae</taxon>
        <taxon>rosids</taxon>
        <taxon>malvids</taxon>
        <taxon>Brassicales</taxon>
        <taxon>Brassicaceae</taxon>
        <taxon>Camelineae</taxon>
        <taxon>Arabidopsis</taxon>
    </lineage>
</organism>
<protein>
    <recommendedName>
        <fullName>Cytosolic sulfotransferase 5</fullName>
        <shortName>AtSOT5</shortName>
        <ecNumber>2.8.2.-</ecNumber>
    </recommendedName>
    <alternativeName>
        <fullName>Flavonoid 7-sulfotransferase 3a</fullName>
        <shortName>AtST3a</shortName>
    </alternativeName>
</protein>
<name>SOT5_ARATH</name>
<accession>Q9M1V2</accession>
<sequence>MEMNLRIEDLNEETKTLISSLPSDKDFTGKTICKYQGCWYTHNVLQAVLNFQKSFKPQDTDIIVASFPKCGTTWLKALTFALLHRSKQPSHDDDHPLLSNNPHVLVPYFEIDLYLRSENPDLTKFSSSPRLFSTHVPSHTLQEGLKGSTCKIVYISRNVKDTLVSYWHFFTKKQTDEKIISSFEDTFEMFCRGVSIFGPFWDHVLSYWRGSLEDPNHVLFMKFEEMKAEPRDQIKKFAEFLGCPFTKEEEESGSVDEIIDLCSLRNLSSLEINKTGKLNSGRENKMFFRKGEVGDWKNYLTPEMENKIDMIIQEKLQNSGLKF</sequence>
<feature type="chain" id="PRO_0000417053" description="Cytosolic sulfotransferase 5">
    <location>
        <begin position="1"/>
        <end position="323"/>
    </location>
</feature>
<feature type="active site" description="Proton acceptor" evidence="1">
    <location>
        <position position="135"/>
    </location>
</feature>
<feature type="binding site" evidence="1">
    <location>
        <begin position="69"/>
        <end position="74"/>
    </location>
    <ligand>
        <name>3'-phosphoadenylyl sulfate</name>
        <dbReference type="ChEBI" id="CHEBI:58339"/>
    </ligand>
</feature>
<feature type="binding site" evidence="1">
    <location>
        <position position="157"/>
    </location>
    <ligand>
        <name>3'-phosphoadenylyl sulfate</name>
        <dbReference type="ChEBI" id="CHEBI:58339"/>
    </ligand>
</feature>
<feature type="binding site" evidence="1">
    <location>
        <position position="165"/>
    </location>
    <ligand>
        <name>3'-phosphoadenylyl sulfate</name>
        <dbReference type="ChEBI" id="CHEBI:58339"/>
    </ligand>
</feature>
<feature type="binding site" evidence="1">
    <location>
        <begin position="289"/>
        <end position="291"/>
    </location>
    <ligand>
        <name>3'-phosphoadenylyl sulfate</name>
        <dbReference type="ChEBI" id="CHEBI:58339"/>
    </ligand>
</feature>
<keyword id="KW-0963">Cytoplasm</keyword>
<keyword id="KW-1185">Reference proteome</keyword>
<keyword id="KW-0808">Transferase</keyword>
<comment type="function">
    <text evidence="2">Sulfotransferase that utilizes 3'-phospho-5'-adenylyl sulfate (PAPS) as sulfonate donor to specifically catalyze the sulfate conjugation of flavones and flavonols. Strictly specific for the position 7. Substrate preference is kaempferol 3-sulfate &gt; isorhamnetin &gt; kaempferol.</text>
</comment>
<comment type="biophysicochemical properties">
    <kinetics>
        <KM evidence="2">2 uM for kaempferol 3-sulfate</KM>
        <KM evidence="2">6 uM for isorhamnetin</KM>
        <KM evidence="2">3.2 uM for kaempferol</KM>
        <KM evidence="2">11 uM for galangin</KM>
        <KM evidence="2">1.5 uM for quercetin</KM>
        <KM evidence="2">5.1 uM for apigenin 4'-sulfate</KM>
        <KM evidence="2">51 uM for apigenin</KM>
        <KM evidence="2">40.6 uM for chrysin</KM>
        <KM evidence="2">26 uM for 7-hydroxyflavone</KM>
        <KM evidence="2">1 uM for 3'-phospho-5'-adenylyl sulfate</KM>
        <Vmax evidence="2">286.0 pmol/sec/mg enzyme with kaempferol 3-sulfate as substrate</Vmax>
        <Vmax evidence="2">232.0 pmol/sec/mg enzyme with isorhamnetin as substrate</Vmax>
        <Vmax evidence="2">116.0 pmol/sec/mg enzyme with kaempferol as substrate</Vmax>
        <Vmax evidence="2">270.0 pmol/sec/mg enzyme with galangin as substrate</Vmax>
        <Vmax evidence="2">24.0 pmol/sec/mg enzyme with quercetin as substrate</Vmax>
        <Vmax evidence="2">45.0 pmol/sec/mg enzyme with apigenin 4'-sulfate as substrate</Vmax>
        <Vmax evidence="2">370.0 pmol/sec/mg enzyme with apigenin as substrate</Vmax>
        <Vmax evidence="2">156.0 pmol/sec/mg enzyme with chrysin as substrate</Vmax>
        <Vmax evidence="2">91.0 pmol/sec/mg enzyme with 7-hydroxyflavone as substrate</Vmax>
    </kinetics>
    <phDependence>
        <text evidence="2">Optimum pH is 7.5.</text>
    </phDependence>
</comment>
<comment type="subcellular location">
    <subcellularLocation>
        <location evidence="1">Cytoplasm</location>
    </subcellularLocation>
</comment>
<comment type="tissue specificity">
    <text evidence="2">Expressed in inflorescence stems, roots and siliques.</text>
</comment>
<comment type="developmental stage">
    <text evidence="2">Expressed mostly in 5-day old seedlings, at developmental stage 1.</text>
</comment>
<comment type="induction">
    <text evidence="2">Up-regulated by trans-zeatin, but not by cold, heat, hypoxia, salt stress, auxins, gibberellins, wounding, etiolation and salicylic acid or methyl jasmonate treatments.</text>
</comment>
<comment type="similarity">
    <text evidence="3">Belongs to the sulfotransferase 1 family.</text>
</comment>
<proteinExistence type="evidence at protein level"/>